<reference key="1">
    <citation type="journal article" date="2009" name="Biochemistry">
        <title>Novel alpha D-conopeptides and their precursors identified by cDNA cloning define the D-conotoxin superfamily.</title>
        <authorList>
            <person name="Loughnan M.L."/>
            <person name="Nicke A."/>
            <person name="Lawrence N."/>
            <person name="Lewis R.J."/>
        </authorList>
    </citation>
    <scope>NUCLEOTIDE SEQUENCE [MRNA]</scope>
    <scope>PROTEIN SEQUENCE OF 46-78</scope>
    <scope>GAMMA-CARBOXYGLUTAMATION AT GLU-50</scope>
    <scope>HYDROXYLATION AT PRO-56</scope>
    <scope>SUBUNIT</scope>
    <source>
        <tissue>Venom</tissue>
        <tissue>Venom duct</tissue>
    </source>
</reference>
<comment type="function">
    <text evidence="3">Alpha-conotoxins act on postsynaptic membranes, they bind to the nicotinic acetylcholine receptors (nAChR) and thus inhibit them. Through its two C-terminal domains, this homodimeric protein would bind to two nAChR allosteric sites, located outside the nAChR C-loop of the principal binding face and at the adjacent binding interface in a clockwise direction. This toxin specifically blocks mammalian neuronal nAChR of the alpha-7/CHRNA7, alpha-3-beta-2/CHRNA3-CHRNB2 and alpha-4-beta-2/CHRNA4-CHRNB2 subtypes.</text>
</comment>
<comment type="subunit">
    <text evidence="2 5">Hetero-, homo- or pseudo-homodimer (identical sequence, different post-translational modifications) (By similarity). Heterodimer of [carboxy'Glu-48', hydroxy'Pro-54']Ms20.1 and [carboxyGlu-50, hydroxyPro-56]Ms20.4 may exist.</text>
</comment>
<comment type="subcellular location">
    <subcellularLocation>
        <location>Secreted</location>
    </subcellularLocation>
</comment>
<comment type="tissue specificity">
    <text>Expressed by the venom duct.</text>
</comment>
<comment type="domain">
    <text>The cysteine framework is XX (C-CC-C-CC-C-C-C-C).</text>
</comment>
<comment type="domain">
    <text evidence="3">Displays a mini-granulin fold, a structure composed of two short, stacked beta-hairpins connected by two parallel disulfide bonds. This newly described fold is derived from the same cysteine connectivity as knottins (ICK fold). The name 'mini-granulin fold' comes from the structural homology with the N-terminal region of the human granulin.</text>
</comment>
<comment type="similarity">
    <text evidence="6">Belongs to the conotoxin D superfamily.</text>
</comment>
<proteinExistence type="evidence at protein level"/>
<sequence>MPKLAVVLLVLLILPLSYFDVAGGQAAEGDRRGNGLARYPQRGGRDNEAECQINTPGSSWGKCCMTRMCGTMCCARSGCTCVYHWRRGHGCSCPG</sequence>
<keyword id="KW-0008">Acetylcholine receptor inhibiting toxin</keyword>
<keyword id="KW-0903">Direct protein sequencing</keyword>
<keyword id="KW-1015">Disulfide bond</keyword>
<keyword id="KW-0301">Gamma-carboxyglutamic acid</keyword>
<keyword id="KW-0379">Hydroxylation</keyword>
<keyword id="KW-0872">Ion channel impairing toxin</keyword>
<keyword id="KW-0528">Neurotoxin</keyword>
<keyword id="KW-0629">Postsynaptic neurotoxin</keyword>
<keyword id="KW-0964">Secreted</keyword>
<keyword id="KW-0732">Signal</keyword>
<keyword id="KW-0800">Toxin</keyword>
<organism>
    <name type="scientific">Conus mustelinus</name>
    <name type="common">Weasel cone</name>
    <dbReference type="NCBI Taxonomy" id="101309"/>
    <lineage>
        <taxon>Eukaryota</taxon>
        <taxon>Metazoa</taxon>
        <taxon>Spiralia</taxon>
        <taxon>Lophotrochozoa</taxon>
        <taxon>Mollusca</taxon>
        <taxon>Gastropoda</taxon>
        <taxon>Caenogastropoda</taxon>
        <taxon>Neogastropoda</taxon>
        <taxon>Conoidea</taxon>
        <taxon>Conidae</taxon>
        <taxon>Conus</taxon>
        <taxon>Rhizoconus</taxon>
    </lineage>
</organism>
<name>CXAT4_CONMS</name>
<feature type="signal peptide" evidence="4">
    <location>
        <begin position="1"/>
        <end position="24"/>
    </location>
</feature>
<feature type="propeptide" id="PRO_0000391816" evidence="5">
    <location>
        <begin position="25"/>
        <end position="45"/>
    </location>
</feature>
<feature type="chain" id="PRO_0000391817" description="Alpha-conotoxin-like Ms20.4">
    <location>
        <begin position="46"/>
        <end position="95"/>
    </location>
</feature>
<feature type="modified residue" description="4-carboxyglutamate" evidence="5">
    <location>
        <position position="50"/>
    </location>
</feature>
<feature type="modified residue" description="4-hydroxyproline" evidence="5">
    <location>
        <position position="56"/>
    </location>
</feature>
<feature type="disulfide bond" description="Interchain (with C-63)" evidence="1">
    <location>
        <position position="51"/>
    </location>
</feature>
<feature type="disulfide bond" description="Interchain (with C-51)" evidence="1">
    <location>
        <position position="63"/>
    </location>
</feature>
<feature type="disulfide bond" evidence="1">
    <location>
        <begin position="64"/>
        <end position="73"/>
    </location>
</feature>
<feature type="disulfide bond" evidence="1">
    <location>
        <begin position="69"/>
        <end position="81"/>
    </location>
</feature>
<feature type="disulfide bond" evidence="1">
    <location>
        <begin position="74"/>
        <end position="91"/>
    </location>
</feature>
<feature type="disulfide bond" evidence="1">
    <location>
        <begin position="79"/>
        <end position="93"/>
    </location>
</feature>
<evidence type="ECO:0000250" key="1">
    <source>
        <dbReference type="UniProtKB" id="A0A0A0VBX4"/>
    </source>
</evidence>
<evidence type="ECO:0000250" key="2">
    <source>
        <dbReference type="UniProtKB" id="C3VVN5"/>
    </source>
</evidence>
<evidence type="ECO:0000250" key="3">
    <source>
        <dbReference type="UniProtKB" id="P0C1W6"/>
    </source>
</evidence>
<evidence type="ECO:0000255" key="4"/>
<evidence type="ECO:0000269" key="5">
    <source>
    </source>
</evidence>
<evidence type="ECO:0000305" key="6"/>
<protein>
    <recommendedName>
        <fullName>Alpha-conotoxin-like Ms20.4</fullName>
    </recommendedName>
</protein>
<dbReference type="SMR" id="P0CE29"/>
<dbReference type="GO" id="GO:0005576">
    <property type="term" value="C:extracellular region"/>
    <property type="evidence" value="ECO:0007669"/>
    <property type="project" value="UniProtKB-SubCell"/>
</dbReference>
<dbReference type="GO" id="GO:0035792">
    <property type="term" value="C:host cell postsynaptic membrane"/>
    <property type="evidence" value="ECO:0007669"/>
    <property type="project" value="UniProtKB-KW"/>
</dbReference>
<dbReference type="GO" id="GO:0030550">
    <property type="term" value="F:acetylcholine receptor inhibitor activity"/>
    <property type="evidence" value="ECO:0007669"/>
    <property type="project" value="UniProtKB-KW"/>
</dbReference>
<dbReference type="GO" id="GO:0099106">
    <property type="term" value="F:ion channel regulator activity"/>
    <property type="evidence" value="ECO:0007669"/>
    <property type="project" value="UniProtKB-KW"/>
</dbReference>
<dbReference type="GO" id="GO:0090729">
    <property type="term" value="F:toxin activity"/>
    <property type="evidence" value="ECO:0007669"/>
    <property type="project" value="UniProtKB-KW"/>
</dbReference>
<accession>P0CE29</accession>